<gene>
    <name evidence="1" type="primary">nrdR</name>
    <name type="ordered locus">BQ05400</name>
</gene>
<proteinExistence type="inferred from homology"/>
<organism>
    <name type="scientific">Bartonella quintana (strain Toulouse)</name>
    <name type="common">Rochalimaea quintana</name>
    <dbReference type="NCBI Taxonomy" id="283165"/>
    <lineage>
        <taxon>Bacteria</taxon>
        <taxon>Pseudomonadati</taxon>
        <taxon>Pseudomonadota</taxon>
        <taxon>Alphaproteobacteria</taxon>
        <taxon>Hyphomicrobiales</taxon>
        <taxon>Bartonellaceae</taxon>
        <taxon>Bartonella</taxon>
    </lineage>
</organism>
<sequence>MRCPYCQYEDTQVKDSRPVEEGAVIRRRRVCPVCGGRFTTFERVQLRELLVSKKSGRCEPFDRDKLMRSVEIAVRKRNIDPDYIERAISGIVRGLESLGEPEIASEKIGHLVMEALKSIDDIAYIRFASVYRDFRNASDFHDVIDELSKGIANTESCFDE</sequence>
<keyword id="KW-0067">ATP-binding</keyword>
<keyword id="KW-0238">DNA-binding</keyword>
<keyword id="KW-0479">Metal-binding</keyword>
<keyword id="KW-0547">Nucleotide-binding</keyword>
<keyword id="KW-0678">Repressor</keyword>
<keyword id="KW-0804">Transcription</keyword>
<keyword id="KW-0805">Transcription regulation</keyword>
<keyword id="KW-0862">Zinc</keyword>
<keyword id="KW-0863">Zinc-finger</keyword>
<accession>Q6G008</accession>
<comment type="function">
    <text evidence="1">Negatively regulates transcription of bacterial ribonucleotide reductase nrd genes and operons by binding to NrdR-boxes.</text>
</comment>
<comment type="cofactor">
    <cofactor evidence="1">
        <name>Zn(2+)</name>
        <dbReference type="ChEBI" id="CHEBI:29105"/>
    </cofactor>
    <text evidence="1">Binds 1 zinc ion.</text>
</comment>
<comment type="similarity">
    <text evidence="1">Belongs to the NrdR family.</text>
</comment>
<reference key="1">
    <citation type="journal article" date="2004" name="Proc. Natl. Acad. Sci. U.S.A.">
        <title>The louse-borne human pathogen Bartonella quintana is a genomic derivative of the zoonotic agent Bartonella henselae.</title>
        <authorList>
            <person name="Alsmark U.C.M."/>
            <person name="Frank A.C."/>
            <person name="Karlberg E.O."/>
            <person name="Legault B.-A."/>
            <person name="Ardell D.H."/>
            <person name="Canbaeck B."/>
            <person name="Eriksson A.-S."/>
            <person name="Naeslund A.K."/>
            <person name="Handley S.A."/>
            <person name="Huvet M."/>
            <person name="La Scola B."/>
            <person name="Holmberg M."/>
            <person name="Andersson S.G.E."/>
        </authorList>
    </citation>
    <scope>NUCLEOTIDE SEQUENCE [LARGE SCALE GENOMIC DNA]</scope>
    <source>
        <strain>Toulouse</strain>
    </source>
</reference>
<feature type="chain" id="PRO_0000182268" description="Transcriptional repressor NrdR">
    <location>
        <begin position="1"/>
        <end position="160"/>
    </location>
</feature>
<feature type="domain" description="ATP-cone" evidence="1">
    <location>
        <begin position="49"/>
        <end position="139"/>
    </location>
</feature>
<feature type="zinc finger region" evidence="1">
    <location>
        <begin position="3"/>
        <end position="34"/>
    </location>
</feature>
<protein>
    <recommendedName>
        <fullName evidence="1">Transcriptional repressor NrdR</fullName>
    </recommendedName>
</protein>
<evidence type="ECO:0000255" key="1">
    <source>
        <dbReference type="HAMAP-Rule" id="MF_00440"/>
    </source>
</evidence>
<name>NRDR_BARQU</name>
<dbReference type="EMBL" id="BX897700">
    <property type="protein sequence ID" value="CAF26035.1"/>
    <property type="molecule type" value="Genomic_DNA"/>
</dbReference>
<dbReference type="RefSeq" id="WP_011179309.1">
    <property type="nucleotide sequence ID" value="NC_005955.1"/>
</dbReference>
<dbReference type="SMR" id="Q6G008"/>
<dbReference type="KEGG" id="bqu:BQ05400"/>
<dbReference type="eggNOG" id="COG1327">
    <property type="taxonomic scope" value="Bacteria"/>
</dbReference>
<dbReference type="HOGENOM" id="CLU_108412_0_1_5"/>
<dbReference type="OrthoDB" id="9807461at2"/>
<dbReference type="Proteomes" id="UP000000597">
    <property type="component" value="Chromosome"/>
</dbReference>
<dbReference type="GO" id="GO:0005524">
    <property type="term" value="F:ATP binding"/>
    <property type="evidence" value="ECO:0007669"/>
    <property type="project" value="UniProtKB-KW"/>
</dbReference>
<dbReference type="GO" id="GO:0003677">
    <property type="term" value="F:DNA binding"/>
    <property type="evidence" value="ECO:0007669"/>
    <property type="project" value="UniProtKB-KW"/>
</dbReference>
<dbReference type="GO" id="GO:0008270">
    <property type="term" value="F:zinc ion binding"/>
    <property type="evidence" value="ECO:0007669"/>
    <property type="project" value="UniProtKB-UniRule"/>
</dbReference>
<dbReference type="GO" id="GO:0045892">
    <property type="term" value="P:negative regulation of DNA-templated transcription"/>
    <property type="evidence" value="ECO:0007669"/>
    <property type="project" value="UniProtKB-UniRule"/>
</dbReference>
<dbReference type="HAMAP" id="MF_00440">
    <property type="entry name" value="NrdR"/>
    <property type="match status" value="1"/>
</dbReference>
<dbReference type="InterPro" id="IPR005144">
    <property type="entry name" value="ATP-cone_dom"/>
</dbReference>
<dbReference type="InterPro" id="IPR055173">
    <property type="entry name" value="NrdR-like_N"/>
</dbReference>
<dbReference type="InterPro" id="IPR003796">
    <property type="entry name" value="RNR_NrdR-like"/>
</dbReference>
<dbReference type="NCBIfam" id="TIGR00244">
    <property type="entry name" value="transcriptional regulator NrdR"/>
    <property type="match status" value="1"/>
</dbReference>
<dbReference type="PANTHER" id="PTHR30455">
    <property type="entry name" value="TRANSCRIPTIONAL REPRESSOR NRDR"/>
    <property type="match status" value="1"/>
</dbReference>
<dbReference type="PANTHER" id="PTHR30455:SF2">
    <property type="entry name" value="TRANSCRIPTIONAL REPRESSOR NRDR"/>
    <property type="match status" value="1"/>
</dbReference>
<dbReference type="Pfam" id="PF03477">
    <property type="entry name" value="ATP-cone"/>
    <property type="match status" value="1"/>
</dbReference>
<dbReference type="Pfam" id="PF22811">
    <property type="entry name" value="Zn_ribbon_NrdR"/>
    <property type="match status" value="1"/>
</dbReference>
<dbReference type="PROSITE" id="PS51161">
    <property type="entry name" value="ATP_CONE"/>
    <property type="match status" value="1"/>
</dbReference>